<feature type="chain" id="PRO_1000071697" description="4-hydroxy-3-methylbut-2-enyl diphosphate reductase">
    <location>
        <begin position="1"/>
        <end position="318"/>
    </location>
</feature>
<feature type="active site" description="Proton donor" evidence="1">
    <location>
        <position position="126"/>
    </location>
</feature>
<feature type="binding site" evidence="1">
    <location>
        <position position="12"/>
    </location>
    <ligand>
        <name>[4Fe-4S] cluster</name>
        <dbReference type="ChEBI" id="CHEBI:49883"/>
    </ligand>
</feature>
<feature type="binding site" evidence="1">
    <location>
        <position position="41"/>
    </location>
    <ligand>
        <name>(2E)-4-hydroxy-3-methylbut-2-enyl diphosphate</name>
        <dbReference type="ChEBI" id="CHEBI:128753"/>
    </ligand>
</feature>
<feature type="binding site" evidence="1">
    <location>
        <position position="41"/>
    </location>
    <ligand>
        <name>dimethylallyl diphosphate</name>
        <dbReference type="ChEBI" id="CHEBI:57623"/>
    </ligand>
</feature>
<feature type="binding site" evidence="1">
    <location>
        <position position="41"/>
    </location>
    <ligand>
        <name>isopentenyl diphosphate</name>
        <dbReference type="ChEBI" id="CHEBI:128769"/>
    </ligand>
</feature>
<feature type="binding site" evidence="1">
    <location>
        <position position="74"/>
    </location>
    <ligand>
        <name>(2E)-4-hydroxy-3-methylbut-2-enyl diphosphate</name>
        <dbReference type="ChEBI" id="CHEBI:128753"/>
    </ligand>
</feature>
<feature type="binding site" evidence="1">
    <location>
        <position position="74"/>
    </location>
    <ligand>
        <name>dimethylallyl diphosphate</name>
        <dbReference type="ChEBI" id="CHEBI:57623"/>
    </ligand>
</feature>
<feature type="binding site" evidence="1">
    <location>
        <position position="74"/>
    </location>
    <ligand>
        <name>isopentenyl diphosphate</name>
        <dbReference type="ChEBI" id="CHEBI:128769"/>
    </ligand>
</feature>
<feature type="binding site" evidence="1">
    <location>
        <position position="96"/>
    </location>
    <ligand>
        <name>[4Fe-4S] cluster</name>
        <dbReference type="ChEBI" id="CHEBI:49883"/>
    </ligand>
</feature>
<feature type="binding site" evidence="1">
    <location>
        <position position="124"/>
    </location>
    <ligand>
        <name>(2E)-4-hydroxy-3-methylbut-2-enyl diphosphate</name>
        <dbReference type="ChEBI" id="CHEBI:128753"/>
    </ligand>
</feature>
<feature type="binding site" evidence="1">
    <location>
        <position position="124"/>
    </location>
    <ligand>
        <name>dimethylallyl diphosphate</name>
        <dbReference type="ChEBI" id="CHEBI:57623"/>
    </ligand>
</feature>
<feature type="binding site" evidence="1">
    <location>
        <position position="124"/>
    </location>
    <ligand>
        <name>isopentenyl diphosphate</name>
        <dbReference type="ChEBI" id="CHEBI:128769"/>
    </ligand>
</feature>
<feature type="binding site" evidence="1">
    <location>
        <position position="168"/>
    </location>
    <ligand>
        <name>(2E)-4-hydroxy-3-methylbut-2-enyl diphosphate</name>
        <dbReference type="ChEBI" id="CHEBI:128753"/>
    </ligand>
</feature>
<feature type="binding site" evidence="1">
    <location>
        <position position="198"/>
    </location>
    <ligand>
        <name>[4Fe-4S] cluster</name>
        <dbReference type="ChEBI" id="CHEBI:49883"/>
    </ligand>
</feature>
<feature type="binding site" evidence="1">
    <location>
        <position position="226"/>
    </location>
    <ligand>
        <name>(2E)-4-hydroxy-3-methylbut-2-enyl diphosphate</name>
        <dbReference type="ChEBI" id="CHEBI:128753"/>
    </ligand>
</feature>
<feature type="binding site" evidence="1">
    <location>
        <position position="226"/>
    </location>
    <ligand>
        <name>dimethylallyl diphosphate</name>
        <dbReference type="ChEBI" id="CHEBI:57623"/>
    </ligand>
</feature>
<feature type="binding site" evidence="1">
    <location>
        <position position="226"/>
    </location>
    <ligand>
        <name>isopentenyl diphosphate</name>
        <dbReference type="ChEBI" id="CHEBI:128769"/>
    </ligand>
</feature>
<feature type="binding site" evidence="1">
    <location>
        <position position="227"/>
    </location>
    <ligand>
        <name>(2E)-4-hydroxy-3-methylbut-2-enyl diphosphate</name>
        <dbReference type="ChEBI" id="CHEBI:128753"/>
    </ligand>
</feature>
<feature type="binding site" evidence="1">
    <location>
        <position position="227"/>
    </location>
    <ligand>
        <name>dimethylallyl diphosphate</name>
        <dbReference type="ChEBI" id="CHEBI:57623"/>
    </ligand>
</feature>
<feature type="binding site" evidence="1">
    <location>
        <position position="227"/>
    </location>
    <ligand>
        <name>isopentenyl diphosphate</name>
        <dbReference type="ChEBI" id="CHEBI:128769"/>
    </ligand>
</feature>
<feature type="binding site" evidence="1">
    <location>
        <position position="228"/>
    </location>
    <ligand>
        <name>(2E)-4-hydroxy-3-methylbut-2-enyl diphosphate</name>
        <dbReference type="ChEBI" id="CHEBI:128753"/>
    </ligand>
</feature>
<feature type="binding site" evidence="1">
    <location>
        <position position="228"/>
    </location>
    <ligand>
        <name>dimethylallyl diphosphate</name>
        <dbReference type="ChEBI" id="CHEBI:57623"/>
    </ligand>
</feature>
<feature type="binding site" evidence="1">
    <location>
        <position position="228"/>
    </location>
    <ligand>
        <name>isopentenyl diphosphate</name>
        <dbReference type="ChEBI" id="CHEBI:128769"/>
    </ligand>
</feature>
<feature type="binding site" evidence="1">
    <location>
        <position position="270"/>
    </location>
    <ligand>
        <name>(2E)-4-hydroxy-3-methylbut-2-enyl diphosphate</name>
        <dbReference type="ChEBI" id="CHEBI:128753"/>
    </ligand>
</feature>
<feature type="binding site" evidence="1">
    <location>
        <position position="270"/>
    </location>
    <ligand>
        <name>dimethylallyl diphosphate</name>
        <dbReference type="ChEBI" id="CHEBI:57623"/>
    </ligand>
</feature>
<feature type="binding site" evidence="1">
    <location>
        <position position="270"/>
    </location>
    <ligand>
        <name>isopentenyl diphosphate</name>
        <dbReference type="ChEBI" id="CHEBI:128769"/>
    </ligand>
</feature>
<gene>
    <name evidence="1" type="primary">ispH</name>
    <name type="ordered locus">PsycPRwf_0578</name>
</gene>
<reference key="1">
    <citation type="submission" date="2007-05" db="EMBL/GenBank/DDBJ databases">
        <title>Complete sequence of chromosome of Psychrobacter sp. PRwf-1.</title>
        <authorList>
            <consortium name="US DOE Joint Genome Institute"/>
            <person name="Copeland A."/>
            <person name="Lucas S."/>
            <person name="Lapidus A."/>
            <person name="Barry K."/>
            <person name="Detter J.C."/>
            <person name="Glavina del Rio T."/>
            <person name="Hammon N."/>
            <person name="Israni S."/>
            <person name="Dalin E."/>
            <person name="Tice H."/>
            <person name="Pitluck S."/>
            <person name="Chain P."/>
            <person name="Malfatti S."/>
            <person name="Shin M."/>
            <person name="Vergez L."/>
            <person name="Schmutz J."/>
            <person name="Larimer F."/>
            <person name="Land M."/>
            <person name="Hauser L."/>
            <person name="Kyrpides N."/>
            <person name="Kim E."/>
            <person name="Tiedje J."/>
            <person name="Richardson P."/>
        </authorList>
    </citation>
    <scope>NUCLEOTIDE SEQUENCE [LARGE SCALE GENOMIC DNA]</scope>
    <source>
        <strain>PRwf-1</strain>
    </source>
</reference>
<protein>
    <recommendedName>
        <fullName evidence="1">4-hydroxy-3-methylbut-2-enyl diphosphate reductase</fullName>
        <shortName evidence="1">HMBPP reductase</shortName>
        <ecNumber evidence="1">1.17.7.4</ecNumber>
    </recommendedName>
</protein>
<evidence type="ECO:0000255" key="1">
    <source>
        <dbReference type="HAMAP-Rule" id="MF_00191"/>
    </source>
</evidence>
<keyword id="KW-0004">4Fe-4S</keyword>
<keyword id="KW-0408">Iron</keyword>
<keyword id="KW-0411">Iron-sulfur</keyword>
<keyword id="KW-0414">Isoprene biosynthesis</keyword>
<keyword id="KW-0479">Metal-binding</keyword>
<keyword id="KW-0560">Oxidoreductase</keyword>
<name>ISPH_PSYWF</name>
<organism>
    <name type="scientific">Psychrobacter sp. (strain PRwf-1)</name>
    <dbReference type="NCBI Taxonomy" id="349106"/>
    <lineage>
        <taxon>Bacteria</taxon>
        <taxon>Pseudomonadati</taxon>
        <taxon>Pseudomonadota</taxon>
        <taxon>Gammaproteobacteria</taxon>
        <taxon>Moraxellales</taxon>
        <taxon>Moraxellaceae</taxon>
        <taxon>Psychrobacter</taxon>
    </lineage>
</organism>
<dbReference type="EC" id="1.17.7.4" evidence="1"/>
<dbReference type="EMBL" id="CP000713">
    <property type="protein sequence ID" value="ABQ93533.1"/>
    <property type="molecule type" value="Genomic_DNA"/>
</dbReference>
<dbReference type="SMR" id="A5WCZ2"/>
<dbReference type="STRING" id="349106.PsycPRwf_0578"/>
<dbReference type="KEGG" id="prw:PsycPRwf_0578"/>
<dbReference type="eggNOG" id="COG0761">
    <property type="taxonomic scope" value="Bacteria"/>
</dbReference>
<dbReference type="HOGENOM" id="CLU_027486_1_0_6"/>
<dbReference type="UniPathway" id="UPA00056">
    <property type="reaction ID" value="UER00097"/>
</dbReference>
<dbReference type="UniPathway" id="UPA00059">
    <property type="reaction ID" value="UER00105"/>
</dbReference>
<dbReference type="GO" id="GO:0051539">
    <property type="term" value="F:4 iron, 4 sulfur cluster binding"/>
    <property type="evidence" value="ECO:0007669"/>
    <property type="project" value="UniProtKB-UniRule"/>
</dbReference>
<dbReference type="GO" id="GO:0051745">
    <property type="term" value="F:4-hydroxy-3-methylbut-2-enyl diphosphate reductase activity"/>
    <property type="evidence" value="ECO:0007669"/>
    <property type="project" value="UniProtKB-UniRule"/>
</dbReference>
<dbReference type="GO" id="GO:0046872">
    <property type="term" value="F:metal ion binding"/>
    <property type="evidence" value="ECO:0007669"/>
    <property type="project" value="UniProtKB-KW"/>
</dbReference>
<dbReference type="GO" id="GO:0050992">
    <property type="term" value="P:dimethylallyl diphosphate biosynthetic process"/>
    <property type="evidence" value="ECO:0007669"/>
    <property type="project" value="UniProtKB-UniRule"/>
</dbReference>
<dbReference type="GO" id="GO:0019288">
    <property type="term" value="P:isopentenyl diphosphate biosynthetic process, methylerythritol 4-phosphate pathway"/>
    <property type="evidence" value="ECO:0007669"/>
    <property type="project" value="UniProtKB-UniRule"/>
</dbReference>
<dbReference type="GO" id="GO:0016114">
    <property type="term" value="P:terpenoid biosynthetic process"/>
    <property type="evidence" value="ECO:0007669"/>
    <property type="project" value="UniProtKB-UniRule"/>
</dbReference>
<dbReference type="CDD" id="cd13944">
    <property type="entry name" value="lytB_ispH"/>
    <property type="match status" value="1"/>
</dbReference>
<dbReference type="Gene3D" id="3.40.50.11270">
    <property type="match status" value="1"/>
</dbReference>
<dbReference type="Gene3D" id="3.40.1010.20">
    <property type="entry name" value="4-hydroxy-3-methylbut-2-enyl diphosphate reductase, catalytic domain"/>
    <property type="match status" value="2"/>
</dbReference>
<dbReference type="HAMAP" id="MF_00191">
    <property type="entry name" value="IspH"/>
    <property type="match status" value="1"/>
</dbReference>
<dbReference type="InterPro" id="IPR003451">
    <property type="entry name" value="LytB/IspH"/>
</dbReference>
<dbReference type="NCBIfam" id="TIGR00216">
    <property type="entry name" value="ispH_lytB"/>
    <property type="match status" value="1"/>
</dbReference>
<dbReference type="NCBIfam" id="NF002188">
    <property type="entry name" value="PRK01045.1-2"/>
    <property type="match status" value="1"/>
</dbReference>
<dbReference type="NCBIfam" id="NF002190">
    <property type="entry name" value="PRK01045.1-4"/>
    <property type="match status" value="1"/>
</dbReference>
<dbReference type="PANTHER" id="PTHR30426">
    <property type="entry name" value="4-HYDROXY-3-METHYLBUT-2-ENYL DIPHOSPHATE REDUCTASE"/>
    <property type="match status" value="1"/>
</dbReference>
<dbReference type="PANTHER" id="PTHR30426:SF0">
    <property type="entry name" value="4-HYDROXY-3-METHYLBUT-2-ENYL DIPHOSPHATE REDUCTASE"/>
    <property type="match status" value="1"/>
</dbReference>
<dbReference type="Pfam" id="PF02401">
    <property type="entry name" value="LYTB"/>
    <property type="match status" value="1"/>
</dbReference>
<sequence>MQIYLANPRGFCAGVDRAIAIVNEALARFEPPIYVRHEVVHNKFVVSDLANRGAVFVEELHEVPDGSIVIFSAHGVSKAVEDEAERRDLTVFDATCPLVTKVHIEVAKFAREKMDAVLIGHQGHPEVEGTMGRFSAQYGGEIHLVENEADVEKLEVSDPDRLAFVTQTTLSMDDTAVVIDALRKKFPNIQGPRKDDICYATQNRQDAVKDLAQRCEVVLVVGSPNSSNSNRLRELAERMNCKAYLIDNAGEMKKEWFAGVGAVGVTAGASAPEILIQEVLNQLQQWGGDLPDELKGIEENVTFSLPKELRIPVKEVGL</sequence>
<comment type="function">
    <text evidence="1">Catalyzes the conversion of 1-hydroxy-2-methyl-2-(E)-butenyl 4-diphosphate (HMBPP) into a mixture of isopentenyl diphosphate (IPP) and dimethylallyl diphosphate (DMAPP). Acts in the terminal step of the DOXP/MEP pathway for isoprenoid precursor biosynthesis.</text>
</comment>
<comment type="catalytic activity">
    <reaction evidence="1">
        <text>isopentenyl diphosphate + 2 oxidized [2Fe-2S]-[ferredoxin] + H2O = (2E)-4-hydroxy-3-methylbut-2-enyl diphosphate + 2 reduced [2Fe-2S]-[ferredoxin] + 2 H(+)</text>
        <dbReference type="Rhea" id="RHEA:24488"/>
        <dbReference type="Rhea" id="RHEA-COMP:10000"/>
        <dbReference type="Rhea" id="RHEA-COMP:10001"/>
        <dbReference type="ChEBI" id="CHEBI:15377"/>
        <dbReference type="ChEBI" id="CHEBI:15378"/>
        <dbReference type="ChEBI" id="CHEBI:33737"/>
        <dbReference type="ChEBI" id="CHEBI:33738"/>
        <dbReference type="ChEBI" id="CHEBI:128753"/>
        <dbReference type="ChEBI" id="CHEBI:128769"/>
        <dbReference type="EC" id="1.17.7.4"/>
    </reaction>
</comment>
<comment type="catalytic activity">
    <reaction evidence="1">
        <text>dimethylallyl diphosphate + 2 oxidized [2Fe-2S]-[ferredoxin] + H2O = (2E)-4-hydroxy-3-methylbut-2-enyl diphosphate + 2 reduced [2Fe-2S]-[ferredoxin] + 2 H(+)</text>
        <dbReference type="Rhea" id="RHEA:24825"/>
        <dbReference type="Rhea" id="RHEA-COMP:10000"/>
        <dbReference type="Rhea" id="RHEA-COMP:10001"/>
        <dbReference type="ChEBI" id="CHEBI:15377"/>
        <dbReference type="ChEBI" id="CHEBI:15378"/>
        <dbReference type="ChEBI" id="CHEBI:33737"/>
        <dbReference type="ChEBI" id="CHEBI:33738"/>
        <dbReference type="ChEBI" id="CHEBI:57623"/>
        <dbReference type="ChEBI" id="CHEBI:128753"/>
        <dbReference type="EC" id="1.17.7.4"/>
    </reaction>
</comment>
<comment type="cofactor">
    <cofactor evidence="1">
        <name>[4Fe-4S] cluster</name>
        <dbReference type="ChEBI" id="CHEBI:49883"/>
    </cofactor>
    <text evidence="1">Binds 1 [4Fe-4S] cluster per subunit.</text>
</comment>
<comment type="pathway">
    <text evidence="1">Isoprenoid biosynthesis; dimethylallyl diphosphate biosynthesis; dimethylallyl diphosphate from (2E)-4-hydroxy-3-methylbutenyl diphosphate: step 1/1.</text>
</comment>
<comment type="pathway">
    <text evidence="1">Isoprenoid biosynthesis; isopentenyl diphosphate biosynthesis via DXP pathway; isopentenyl diphosphate from 1-deoxy-D-xylulose 5-phosphate: step 6/6.</text>
</comment>
<comment type="similarity">
    <text evidence="1">Belongs to the IspH family.</text>
</comment>
<proteinExistence type="inferred from homology"/>
<accession>A5WCZ2</accession>